<sequence>MPKKEVVDAVTMKRALTRISYEIIERNKGIQDIVLVGIKTRGIYIAQRLAERLKQLEDIDVPVGELDITLYRDDVKDMEEPELHSSDVPVSIEGKEVILVDDVLYTGRTIRAAMDAVMDLGRPRKISLAVLVDRGHRELPIRADYVGKNIPTSKTEEIIVEMEERDGADRIMISKGNE</sequence>
<dbReference type="EC" id="2.4.2.9"/>
<dbReference type="EMBL" id="AE016830">
    <property type="protein sequence ID" value="AAO81497.1"/>
    <property type="molecule type" value="Genomic_DNA"/>
</dbReference>
<dbReference type="RefSeq" id="NP_815427.1">
    <property type="nucleotide sequence ID" value="NC_004668.1"/>
</dbReference>
<dbReference type="RefSeq" id="WP_002357409.1">
    <property type="nucleotide sequence ID" value="NZ_KE136528.1"/>
</dbReference>
<dbReference type="SMR" id="P0DH77"/>
<dbReference type="STRING" id="226185.EF_1721"/>
<dbReference type="EnsemblBacteria" id="AAO81497">
    <property type="protein sequence ID" value="AAO81497"/>
    <property type="gene ID" value="EF_1721"/>
</dbReference>
<dbReference type="KEGG" id="efa:EF1721"/>
<dbReference type="PATRIC" id="fig|226185.45.peg.1791"/>
<dbReference type="eggNOG" id="COG2065">
    <property type="taxonomic scope" value="Bacteria"/>
</dbReference>
<dbReference type="HOGENOM" id="CLU_094234_2_1_9"/>
<dbReference type="Proteomes" id="UP000001415">
    <property type="component" value="Chromosome"/>
</dbReference>
<dbReference type="GO" id="GO:0003723">
    <property type="term" value="F:RNA binding"/>
    <property type="evidence" value="ECO:0007669"/>
    <property type="project" value="UniProtKB-UniRule"/>
</dbReference>
<dbReference type="GO" id="GO:0004845">
    <property type="term" value="F:uracil phosphoribosyltransferase activity"/>
    <property type="evidence" value="ECO:0007669"/>
    <property type="project" value="UniProtKB-UniRule"/>
</dbReference>
<dbReference type="GO" id="GO:0006353">
    <property type="term" value="P:DNA-templated transcription termination"/>
    <property type="evidence" value="ECO:0007669"/>
    <property type="project" value="UniProtKB-UniRule"/>
</dbReference>
<dbReference type="CDD" id="cd06223">
    <property type="entry name" value="PRTases_typeI"/>
    <property type="match status" value="1"/>
</dbReference>
<dbReference type="FunFam" id="3.40.50.2020:FF:000020">
    <property type="entry name" value="Bifunctional protein PyrR"/>
    <property type="match status" value="1"/>
</dbReference>
<dbReference type="Gene3D" id="3.40.50.2020">
    <property type="match status" value="1"/>
</dbReference>
<dbReference type="HAMAP" id="MF_01219">
    <property type="entry name" value="PyrR"/>
    <property type="match status" value="1"/>
</dbReference>
<dbReference type="InterPro" id="IPR000836">
    <property type="entry name" value="PRibTrfase_dom"/>
</dbReference>
<dbReference type="InterPro" id="IPR029057">
    <property type="entry name" value="PRTase-like"/>
</dbReference>
<dbReference type="InterPro" id="IPR023050">
    <property type="entry name" value="PyrR"/>
</dbReference>
<dbReference type="InterPro" id="IPR050137">
    <property type="entry name" value="PyrR_bifunctional"/>
</dbReference>
<dbReference type="NCBIfam" id="NF003545">
    <property type="entry name" value="PRK05205.1-1"/>
    <property type="match status" value="1"/>
</dbReference>
<dbReference type="NCBIfam" id="NF003547">
    <property type="entry name" value="PRK05205.1-3"/>
    <property type="match status" value="1"/>
</dbReference>
<dbReference type="NCBIfam" id="NF003548">
    <property type="entry name" value="PRK05205.1-4"/>
    <property type="match status" value="1"/>
</dbReference>
<dbReference type="NCBIfam" id="NF003549">
    <property type="entry name" value="PRK05205.1-5"/>
    <property type="match status" value="1"/>
</dbReference>
<dbReference type="PANTHER" id="PTHR11608">
    <property type="entry name" value="BIFUNCTIONAL PROTEIN PYRR"/>
    <property type="match status" value="1"/>
</dbReference>
<dbReference type="PANTHER" id="PTHR11608:SF0">
    <property type="entry name" value="BIFUNCTIONAL PROTEIN PYRR"/>
    <property type="match status" value="1"/>
</dbReference>
<dbReference type="Pfam" id="PF00156">
    <property type="entry name" value="Pribosyltran"/>
    <property type="match status" value="1"/>
</dbReference>
<dbReference type="SUPFAM" id="SSF53271">
    <property type="entry name" value="PRTase-like"/>
    <property type="match status" value="1"/>
</dbReference>
<comment type="function">
    <text evidence="1">Regulates transcriptional attenuation of the pyrimidine nucleotide (pyr) operon in response to exogenous pyrimidines, by binding to the anti-antiterminator region of the 5' leader on pyr mRNA. This probably favors formation of a transcription terminator hairpin, leading to a reduced expression of downstream genes (By similarity).</text>
</comment>
<comment type="function">
    <text evidence="1">Also displays a weak uracil phosphoribosyltransferase activity which is not physiologically significant.</text>
</comment>
<comment type="catalytic activity">
    <reaction>
        <text>UMP + diphosphate = 5-phospho-alpha-D-ribose 1-diphosphate + uracil</text>
        <dbReference type="Rhea" id="RHEA:13017"/>
        <dbReference type="ChEBI" id="CHEBI:17568"/>
        <dbReference type="ChEBI" id="CHEBI:33019"/>
        <dbReference type="ChEBI" id="CHEBI:57865"/>
        <dbReference type="ChEBI" id="CHEBI:58017"/>
        <dbReference type="EC" id="2.4.2.9"/>
    </reaction>
</comment>
<comment type="subunit">
    <text evidence="1">Homodimer and homohexamer; in equilibrium.</text>
</comment>
<comment type="similarity">
    <text evidence="2">Belongs to the purine/pyrimidine phosphoribosyltransferase family. PyrR subfamily.</text>
</comment>
<reference key="1">
    <citation type="journal article" date="2003" name="Science">
        <title>Role of mobile DNA in the evolution of vancomycin-resistant Enterococcus faecalis.</title>
        <authorList>
            <person name="Paulsen I.T."/>
            <person name="Banerjei L."/>
            <person name="Myers G.S.A."/>
            <person name="Nelson K.E."/>
            <person name="Seshadri R."/>
            <person name="Read T.D."/>
            <person name="Fouts D.E."/>
            <person name="Eisen J.A."/>
            <person name="Gill S.R."/>
            <person name="Heidelberg J.F."/>
            <person name="Tettelin H."/>
            <person name="Dodson R.J."/>
            <person name="Umayam L.A."/>
            <person name="Brinkac L.M."/>
            <person name="Beanan M.J."/>
            <person name="Daugherty S.C."/>
            <person name="DeBoy R.T."/>
            <person name="Durkin S.A."/>
            <person name="Kolonay J.F."/>
            <person name="Madupu R."/>
            <person name="Nelson W.C."/>
            <person name="Vamathevan J.J."/>
            <person name="Tran B."/>
            <person name="Upton J."/>
            <person name="Hansen T."/>
            <person name="Shetty J."/>
            <person name="Khouri H.M."/>
            <person name="Utterback T.R."/>
            <person name="Radune D."/>
            <person name="Ketchum K.A."/>
            <person name="Dougherty B.A."/>
            <person name="Fraser C.M."/>
        </authorList>
    </citation>
    <scope>NUCLEOTIDE SEQUENCE [LARGE SCALE GENOMIC DNA]</scope>
    <source>
        <strain>ATCC 700802 / V583</strain>
    </source>
</reference>
<gene>
    <name type="primary">pyrR</name>
    <name type="ordered locus">EF_1721</name>
</gene>
<accession>P0DH77</accession>
<accession>O07659</accession>
<accession>O52707</accession>
<evidence type="ECO:0000250" key="1"/>
<evidence type="ECO:0000305" key="2"/>
<organism>
    <name type="scientific">Enterococcus faecalis (strain ATCC 700802 / V583)</name>
    <dbReference type="NCBI Taxonomy" id="226185"/>
    <lineage>
        <taxon>Bacteria</taxon>
        <taxon>Bacillati</taxon>
        <taxon>Bacillota</taxon>
        <taxon>Bacilli</taxon>
        <taxon>Lactobacillales</taxon>
        <taxon>Enterococcaceae</taxon>
        <taxon>Enterococcus</taxon>
    </lineage>
</organism>
<feature type="chain" id="PRO_0000183035" description="Bifunctional protein pyrR">
    <location>
        <begin position="1"/>
        <end position="178"/>
    </location>
</feature>
<feature type="short sequence motif" description="PRPP-binding" evidence="1">
    <location>
        <begin position="97"/>
        <end position="109"/>
    </location>
</feature>
<feature type="binding site" evidence="1">
    <location>
        <begin position="40"/>
        <end position="41"/>
    </location>
    <ligand>
        <name>substrate</name>
    </ligand>
</feature>
<feature type="binding site" evidence="1">
    <location>
        <begin position="101"/>
        <end position="109"/>
    </location>
    <ligand>
        <name>substrate</name>
    </ligand>
</feature>
<feature type="binding site" evidence="1">
    <location>
        <position position="134"/>
    </location>
    <ligand>
        <name>substrate</name>
    </ligand>
</feature>
<proteinExistence type="inferred from homology"/>
<name>PYRR_ENTFA</name>
<keyword id="KW-0328">Glycosyltransferase</keyword>
<keyword id="KW-1185">Reference proteome</keyword>
<keyword id="KW-0694">RNA-binding</keyword>
<keyword id="KW-0804">Transcription</keyword>
<keyword id="KW-0805">Transcription regulation</keyword>
<keyword id="KW-0806">Transcription termination</keyword>
<keyword id="KW-0808">Transferase</keyword>
<protein>
    <recommendedName>
        <fullName>Bifunctional protein pyrR</fullName>
    </recommendedName>
    <domain>
        <recommendedName>
            <fullName>Pyrimidine operon regulatory protein</fullName>
        </recommendedName>
    </domain>
    <domain>
        <recommendedName>
            <fullName>Uracil phosphoribosyltransferase</fullName>
            <shortName>UPRTase</shortName>
            <ecNumber>2.4.2.9</ecNumber>
        </recommendedName>
    </domain>
</protein>